<dbReference type="EC" id="1.14.12.17" evidence="1"/>
<dbReference type="EMBL" id="BA000037">
    <property type="protein sequence ID" value="BAC95828.1"/>
    <property type="molecule type" value="Genomic_DNA"/>
</dbReference>
<dbReference type="SMR" id="Q7MH09"/>
<dbReference type="STRING" id="672.VV93_v1c27920"/>
<dbReference type="KEGG" id="vvy:VV3064"/>
<dbReference type="eggNOG" id="COG1017">
    <property type="taxonomic scope" value="Bacteria"/>
</dbReference>
<dbReference type="eggNOG" id="COG1018">
    <property type="taxonomic scope" value="Bacteria"/>
</dbReference>
<dbReference type="HOGENOM" id="CLU_003827_12_0_6"/>
<dbReference type="Proteomes" id="UP000002675">
    <property type="component" value="Chromosome I"/>
</dbReference>
<dbReference type="GO" id="GO:0071949">
    <property type="term" value="F:FAD binding"/>
    <property type="evidence" value="ECO:0007669"/>
    <property type="project" value="InterPro"/>
</dbReference>
<dbReference type="GO" id="GO:0020037">
    <property type="term" value="F:heme binding"/>
    <property type="evidence" value="ECO:0007669"/>
    <property type="project" value="InterPro"/>
</dbReference>
<dbReference type="GO" id="GO:0046872">
    <property type="term" value="F:metal ion binding"/>
    <property type="evidence" value="ECO:0007669"/>
    <property type="project" value="UniProtKB-KW"/>
</dbReference>
<dbReference type="GO" id="GO:0008941">
    <property type="term" value="F:nitric oxide dioxygenase NAD(P)H activity"/>
    <property type="evidence" value="ECO:0007669"/>
    <property type="project" value="UniProtKB-UniRule"/>
</dbReference>
<dbReference type="GO" id="GO:0019825">
    <property type="term" value="F:oxygen binding"/>
    <property type="evidence" value="ECO:0007669"/>
    <property type="project" value="InterPro"/>
</dbReference>
<dbReference type="GO" id="GO:0005344">
    <property type="term" value="F:oxygen carrier activity"/>
    <property type="evidence" value="ECO:0007669"/>
    <property type="project" value="UniProtKB-UniRule"/>
</dbReference>
<dbReference type="GO" id="GO:0071500">
    <property type="term" value="P:cellular response to nitrosative stress"/>
    <property type="evidence" value="ECO:0007669"/>
    <property type="project" value="TreeGrafter"/>
</dbReference>
<dbReference type="GO" id="GO:0046210">
    <property type="term" value="P:nitric oxide catabolic process"/>
    <property type="evidence" value="ECO:0007669"/>
    <property type="project" value="TreeGrafter"/>
</dbReference>
<dbReference type="GO" id="GO:0009636">
    <property type="term" value="P:response to toxic substance"/>
    <property type="evidence" value="ECO:0007669"/>
    <property type="project" value="UniProtKB-KW"/>
</dbReference>
<dbReference type="CDD" id="cd06184">
    <property type="entry name" value="flavohem_like_fad_nad_binding"/>
    <property type="match status" value="1"/>
</dbReference>
<dbReference type="CDD" id="cd14776">
    <property type="entry name" value="HmpEc-globin-like"/>
    <property type="match status" value="1"/>
</dbReference>
<dbReference type="FunFam" id="1.10.490.10:FF:000003">
    <property type="entry name" value="Flavohemoprotein"/>
    <property type="match status" value="1"/>
</dbReference>
<dbReference type="FunFam" id="2.40.30.10:FF:000034">
    <property type="entry name" value="Flavohemoprotein"/>
    <property type="match status" value="1"/>
</dbReference>
<dbReference type="FunFam" id="3.40.50.80:FF:000010">
    <property type="entry name" value="Flavohemoprotein"/>
    <property type="match status" value="1"/>
</dbReference>
<dbReference type="Gene3D" id="1.10.490.10">
    <property type="entry name" value="Globins"/>
    <property type="match status" value="1"/>
</dbReference>
<dbReference type="Gene3D" id="3.40.50.80">
    <property type="entry name" value="Nucleotide-binding domain of ferredoxin-NADP reductase (FNR) module"/>
    <property type="match status" value="1"/>
</dbReference>
<dbReference type="Gene3D" id="2.40.30.10">
    <property type="entry name" value="Translation factors"/>
    <property type="match status" value="1"/>
</dbReference>
<dbReference type="HAMAP" id="MF_01252">
    <property type="entry name" value="Hmp"/>
    <property type="match status" value="1"/>
</dbReference>
<dbReference type="InterPro" id="IPR008333">
    <property type="entry name" value="Cbr1-like_FAD-bd_dom"/>
</dbReference>
<dbReference type="InterPro" id="IPR017927">
    <property type="entry name" value="FAD-bd_FR_type"/>
</dbReference>
<dbReference type="InterPro" id="IPR001709">
    <property type="entry name" value="Flavoprot_Pyr_Nucl_cyt_Rdtase"/>
</dbReference>
<dbReference type="InterPro" id="IPR039261">
    <property type="entry name" value="FNR_nucleotide-bd"/>
</dbReference>
<dbReference type="InterPro" id="IPR000971">
    <property type="entry name" value="Globin"/>
</dbReference>
<dbReference type="InterPro" id="IPR009050">
    <property type="entry name" value="Globin-like_sf"/>
</dbReference>
<dbReference type="InterPro" id="IPR012292">
    <property type="entry name" value="Globin/Proto"/>
</dbReference>
<dbReference type="InterPro" id="IPR023950">
    <property type="entry name" value="Hmp"/>
</dbReference>
<dbReference type="InterPro" id="IPR001433">
    <property type="entry name" value="OxRdtase_FAD/NAD-bd"/>
</dbReference>
<dbReference type="InterPro" id="IPR017938">
    <property type="entry name" value="Riboflavin_synthase-like_b-brl"/>
</dbReference>
<dbReference type="NCBIfam" id="NF009805">
    <property type="entry name" value="PRK13289.1"/>
    <property type="match status" value="1"/>
</dbReference>
<dbReference type="PANTHER" id="PTHR43396">
    <property type="entry name" value="FLAVOHEMOPROTEIN"/>
    <property type="match status" value="1"/>
</dbReference>
<dbReference type="PANTHER" id="PTHR43396:SF3">
    <property type="entry name" value="FLAVOHEMOPROTEIN"/>
    <property type="match status" value="1"/>
</dbReference>
<dbReference type="Pfam" id="PF00970">
    <property type="entry name" value="FAD_binding_6"/>
    <property type="match status" value="1"/>
</dbReference>
<dbReference type="Pfam" id="PF00042">
    <property type="entry name" value="Globin"/>
    <property type="match status" value="1"/>
</dbReference>
<dbReference type="Pfam" id="PF00175">
    <property type="entry name" value="NAD_binding_1"/>
    <property type="match status" value="1"/>
</dbReference>
<dbReference type="PRINTS" id="PR00371">
    <property type="entry name" value="FPNCR"/>
</dbReference>
<dbReference type="PRINTS" id="PR00410">
    <property type="entry name" value="PHEHYDRXLASE"/>
</dbReference>
<dbReference type="SUPFAM" id="SSF52343">
    <property type="entry name" value="Ferredoxin reductase-like, C-terminal NADP-linked domain"/>
    <property type="match status" value="1"/>
</dbReference>
<dbReference type="SUPFAM" id="SSF46458">
    <property type="entry name" value="Globin-like"/>
    <property type="match status" value="1"/>
</dbReference>
<dbReference type="SUPFAM" id="SSF63380">
    <property type="entry name" value="Riboflavin synthase domain-like"/>
    <property type="match status" value="1"/>
</dbReference>
<dbReference type="PROSITE" id="PS51384">
    <property type="entry name" value="FAD_FR"/>
    <property type="match status" value="1"/>
</dbReference>
<dbReference type="PROSITE" id="PS01033">
    <property type="entry name" value="GLOBIN"/>
    <property type="match status" value="1"/>
</dbReference>
<name>HMP_VIBVY</name>
<accession>Q7MH09</accession>
<gene>
    <name evidence="1" type="primary">hmp</name>
    <name type="ordered locus">VV3064</name>
</gene>
<evidence type="ECO:0000255" key="1">
    <source>
        <dbReference type="HAMAP-Rule" id="MF_01252"/>
    </source>
</evidence>
<evidence type="ECO:0000255" key="2">
    <source>
        <dbReference type="PROSITE-ProRule" id="PRU00238"/>
    </source>
</evidence>
<feature type="chain" id="PRO_0000052452" description="Flavohemoprotein">
    <location>
        <begin position="1"/>
        <end position="394"/>
    </location>
</feature>
<feature type="domain" description="Globin" evidence="2">
    <location>
        <begin position="1"/>
        <end position="136"/>
    </location>
</feature>
<feature type="domain" description="FAD-binding FR-type" evidence="1">
    <location>
        <begin position="150"/>
        <end position="255"/>
    </location>
</feature>
<feature type="region of interest" description="Reductase">
    <location>
        <begin position="147"/>
        <end position="394"/>
    </location>
</feature>
<feature type="active site" description="Charge relay system" evidence="1">
    <location>
        <position position="95"/>
    </location>
</feature>
<feature type="active site" description="Charge relay system" evidence="1">
    <location>
        <position position="135"/>
    </location>
</feature>
<feature type="binding site" description="proximal binding residue" evidence="1">
    <location>
        <position position="85"/>
    </location>
    <ligand>
        <name>heme b</name>
        <dbReference type="ChEBI" id="CHEBI:60344"/>
    </ligand>
    <ligandPart>
        <name>Fe</name>
        <dbReference type="ChEBI" id="CHEBI:18248"/>
    </ligandPart>
</feature>
<feature type="binding site" evidence="1">
    <location>
        <position position="188"/>
    </location>
    <ligand>
        <name>FAD</name>
        <dbReference type="ChEBI" id="CHEBI:57692"/>
    </ligand>
</feature>
<feature type="binding site" evidence="1">
    <location>
        <begin position="204"/>
        <end position="207"/>
    </location>
    <ligand>
        <name>FAD</name>
        <dbReference type="ChEBI" id="CHEBI:57692"/>
    </ligand>
</feature>
<feature type="binding site" evidence="1">
    <location>
        <begin position="268"/>
        <end position="273"/>
    </location>
    <ligand>
        <name>NADP(+)</name>
        <dbReference type="ChEBI" id="CHEBI:58349"/>
    </ligand>
</feature>
<feature type="binding site" evidence="1">
    <location>
        <begin position="387"/>
        <end position="390"/>
    </location>
    <ligand>
        <name>FAD</name>
        <dbReference type="ChEBI" id="CHEBI:57692"/>
    </ligand>
</feature>
<feature type="site" description="Involved in heme-bound ligand stabilization and O-O bond activation" evidence="1">
    <location>
        <position position="29"/>
    </location>
</feature>
<feature type="site" description="Influences the redox potential of the prosthetic heme and FAD groups" evidence="1">
    <location>
        <position position="84"/>
    </location>
</feature>
<feature type="site" description="Influences the redox potential of the prosthetic heme and FAD groups" evidence="1">
    <location>
        <position position="386"/>
    </location>
</feature>
<sequence>MLSENTINIVKSTAPLLAETGPKLTAHFYQRMFEHNPELKDIFNMSNQRNGDQREALFNAICAYASNIDNLPALLGAVEKIAHKHSSFLITADQYQIVGSHLLATIDELFSPGQAVLDAWAEAYGVLANVFIQREEQIYQANQSQTGGWRGLREFELVEKQYESAHICSFVFKPVDGGSVVSFKPGQYLGIYINDEQFENQEIRQYSLSSSVRPDCYRISVKREEGGRVSNYLHDHLDVGSKVKLAAPAGDFFLDAAPTAPVVLISAGVGLTPTLSMLESLTEHQAPVTWIHATENGQQHAFKQHVKQLVETHPHFNSLVWYNQPNSDDKIGDDFQFSGWVNLHEIETVLKQADVQVYFCGPVGFMQFIAKQLLEMGVPEQQFHYECFGPHKVV</sequence>
<protein>
    <recommendedName>
        <fullName evidence="1">Flavohemoprotein</fullName>
    </recommendedName>
    <alternativeName>
        <fullName evidence="1">Flavohemoglobin</fullName>
    </alternativeName>
    <alternativeName>
        <fullName evidence="1">Hemoglobin-like protein</fullName>
    </alternativeName>
    <alternativeName>
        <fullName evidence="1">Nitric oxide dioxygenase</fullName>
        <shortName evidence="1">NO oxygenase</shortName>
        <shortName evidence="1">NOD</shortName>
        <ecNumber evidence="1">1.14.12.17</ecNumber>
    </alternativeName>
</protein>
<organism>
    <name type="scientific">Vibrio vulnificus (strain YJ016)</name>
    <dbReference type="NCBI Taxonomy" id="196600"/>
    <lineage>
        <taxon>Bacteria</taxon>
        <taxon>Pseudomonadati</taxon>
        <taxon>Pseudomonadota</taxon>
        <taxon>Gammaproteobacteria</taxon>
        <taxon>Vibrionales</taxon>
        <taxon>Vibrionaceae</taxon>
        <taxon>Vibrio</taxon>
    </lineage>
</organism>
<keyword id="KW-0216">Detoxification</keyword>
<keyword id="KW-0274">FAD</keyword>
<keyword id="KW-0285">Flavoprotein</keyword>
<keyword id="KW-0349">Heme</keyword>
<keyword id="KW-0408">Iron</keyword>
<keyword id="KW-0479">Metal-binding</keyword>
<keyword id="KW-0520">NAD</keyword>
<keyword id="KW-0521">NADP</keyword>
<keyword id="KW-0560">Oxidoreductase</keyword>
<keyword id="KW-0561">Oxygen transport</keyword>
<keyword id="KW-0813">Transport</keyword>
<comment type="function">
    <text evidence="1">Is involved in NO detoxification in an aerobic process, termed nitric oxide dioxygenase (NOD) reaction that utilizes O(2) and NAD(P)H to convert NO to nitrate, which protects the bacterium from various noxious nitrogen compounds. Therefore, plays a central role in the inducible response to nitrosative stress.</text>
</comment>
<comment type="catalytic activity">
    <reaction evidence="1">
        <text>2 nitric oxide + NADPH + 2 O2 = 2 nitrate + NADP(+) + H(+)</text>
        <dbReference type="Rhea" id="RHEA:19465"/>
        <dbReference type="ChEBI" id="CHEBI:15378"/>
        <dbReference type="ChEBI" id="CHEBI:15379"/>
        <dbReference type="ChEBI" id="CHEBI:16480"/>
        <dbReference type="ChEBI" id="CHEBI:17632"/>
        <dbReference type="ChEBI" id="CHEBI:57783"/>
        <dbReference type="ChEBI" id="CHEBI:58349"/>
        <dbReference type="EC" id="1.14.12.17"/>
    </reaction>
</comment>
<comment type="catalytic activity">
    <reaction evidence="1">
        <text>2 nitric oxide + NADH + 2 O2 = 2 nitrate + NAD(+) + H(+)</text>
        <dbReference type="Rhea" id="RHEA:19469"/>
        <dbReference type="ChEBI" id="CHEBI:15378"/>
        <dbReference type="ChEBI" id="CHEBI:15379"/>
        <dbReference type="ChEBI" id="CHEBI:16480"/>
        <dbReference type="ChEBI" id="CHEBI:17632"/>
        <dbReference type="ChEBI" id="CHEBI:57540"/>
        <dbReference type="ChEBI" id="CHEBI:57945"/>
        <dbReference type="EC" id="1.14.12.17"/>
    </reaction>
</comment>
<comment type="cofactor">
    <cofactor evidence="1">
        <name>heme b</name>
        <dbReference type="ChEBI" id="CHEBI:60344"/>
    </cofactor>
    <text evidence="1">Binds 1 heme b (iron(II)-protoporphyrin IX) group per subunit.</text>
</comment>
<comment type="cofactor">
    <cofactor evidence="1">
        <name>FAD</name>
        <dbReference type="ChEBI" id="CHEBI:57692"/>
    </cofactor>
    <text evidence="1">Binds 1 FAD per subunit.</text>
</comment>
<comment type="domain">
    <text>Consists of two distinct domains; an N-terminal heme-containing oxygen-binding domain and a C-terminal reductase domain with binding sites for FAD and NAD(P)H.</text>
</comment>
<comment type="similarity">
    <text evidence="1">Belongs to the globin family. Two-domain flavohemoproteins subfamily.</text>
</comment>
<comment type="similarity">
    <text evidence="1">In the C-terminal section; belongs to the flavoprotein pyridine nucleotide cytochrome reductase family.</text>
</comment>
<reference key="1">
    <citation type="journal article" date="2003" name="Genome Res.">
        <title>Comparative genome analysis of Vibrio vulnificus, a marine pathogen.</title>
        <authorList>
            <person name="Chen C.-Y."/>
            <person name="Wu K.-M."/>
            <person name="Chang Y.-C."/>
            <person name="Chang C.-H."/>
            <person name="Tsai H.-C."/>
            <person name="Liao T.-L."/>
            <person name="Liu Y.-M."/>
            <person name="Chen H.-J."/>
            <person name="Shen A.B.-T."/>
            <person name="Li J.-C."/>
            <person name="Su T.-L."/>
            <person name="Shao C.-P."/>
            <person name="Lee C.-T."/>
            <person name="Hor L.-I."/>
            <person name="Tsai S.-F."/>
        </authorList>
    </citation>
    <scope>NUCLEOTIDE SEQUENCE [LARGE SCALE GENOMIC DNA]</scope>
    <source>
        <strain>YJ016</strain>
    </source>
</reference>
<proteinExistence type="inferred from homology"/>